<evidence type="ECO:0000250" key="1"/>
<evidence type="ECO:0000305" key="2"/>
<gene>
    <name type="primary">mss51</name>
    <name type="ORF">SPAC25B8.04c</name>
</gene>
<organism>
    <name type="scientific">Schizosaccharomyces pombe (strain 972 / ATCC 24843)</name>
    <name type="common">Fission yeast</name>
    <dbReference type="NCBI Taxonomy" id="284812"/>
    <lineage>
        <taxon>Eukaryota</taxon>
        <taxon>Fungi</taxon>
        <taxon>Dikarya</taxon>
        <taxon>Ascomycota</taxon>
        <taxon>Taphrinomycotina</taxon>
        <taxon>Schizosaccharomycetes</taxon>
        <taxon>Schizosaccharomycetales</taxon>
        <taxon>Schizosaccharomycetaceae</taxon>
        <taxon>Schizosaccharomyces</taxon>
    </lineage>
</organism>
<proteinExistence type="inferred from homology"/>
<comment type="function">
    <text evidence="1">Has a dual role in the assembly of cytochrome oxidase subunit 1 (cox1). It has a regulative function on cox1 synthesis, acting as a translational activator specific for the cox1 mRNA, and it also binds to newly synthesized cox1 protein (By similarity).</text>
</comment>
<comment type="subcellular location">
    <subcellularLocation>
        <location evidence="1">Mitochondrion inner membrane</location>
        <topology evidence="1">Peripheral membrane protein</topology>
        <orientation evidence="1">Matrix side</orientation>
    </subcellularLocation>
</comment>
<comment type="similarity">
    <text evidence="2">Belongs to the MSS51 family.</text>
</comment>
<comment type="caution">
    <text evidence="2">Although no clear MSS51 ortholog is encoded in mammalian genomes, the mammalian MSS51/ZMYND17 protein of unknown function is significantly similar.</text>
</comment>
<feature type="chain" id="PRO_0000352654" description="Protein mss51">
    <location>
        <begin position="1"/>
        <end position="378"/>
    </location>
</feature>
<protein>
    <recommendedName>
        <fullName>Protein mss51</fullName>
    </recommendedName>
</protein>
<dbReference type="EMBL" id="CU329670">
    <property type="protein sequence ID" value="CAB61770.1"/>
    <property type="molecule type" value="Genomic_DNA"/>
</dbReference>
<dbReference type="PIR" id="T50191">
    <property type="entry name" value="T50191"/>
</dbReference>
<dbReference type="RefSeq" id="NP_594464.1">
    <property type="nucleotide sequence ID" value="NM_001019893.2"/>
</dbReference>
<dbReference type="BioGRID" id="278090">
    <property type="interactions" value="14"/>
</dbReference>
<dbReference type="FunCoup" id="Q9UTB4">
    <property type="interactions" value="83"/>
</dbReference>
<dbReference type="STRING" id="284812.Q9UTB4"/>
<dbReference type="iPTMnet" id="Q9UTB4"/>
<dbReference type="PaxDb" id="4896-SPAC25B8.04c.1"/>
<dbReference type="EnsemblFungi" id="SPAC25B8.04c.1">
    <property type="protein sequence ID" value="SPAC25B8.04c.1:pep"/>
    <property type="gene ID" value="SPAC25B8.04c"/>
</dbReference>
<dbReference type="GeneID" id="2541593"/>
<dbReference type="KEGG" id="spo:2541593"/>
<dbReference type="PomBase" id="SPAC25B8.04c">
    <property type="gene designation" value="mss51"/>
</dbReference>
<dbReference type="VEuPathDB" id="FungiDB:SPAC25B8.04c"/>
<dbReference type="eggNOG" id="ENOG502QQBW">
    <property type="taxonomic scope" value="Eukaryota"/>
</dbReference>
<dbReference type="HOGENOM" id="CLU_033072_0_0_1"/>
<dbReference type="InParanoid" id="Q9UTB4"/>
<dbReference type="OMA" id="VAVKANW"/>
<dbReference type="PhylomeDB" id="Q9UTB4"/>
<dbReference type="PRO" id="PR:Q9UTB4"/>
<dbReference type="Proteomes" id="UP000002485">
    <property type="component" value="Chromosome I"/>
</dbReference>
<dbReference type="GO" id="GO:0005743">
    <property type="term" value="C:mitochondrial inner membrane"/>
    <property type="evidence" value="ECO:0007669"/>
    <property type="project" value="UniProtKB-SubCell"/>
</dbReference>
<dbReference type="GO" id="GO:0031966">
    <property type="term" value="C:mitochondrial membrane"/>
    <property type="evidence" value="ECO:0000314"/>
    <property type="project" value="PomBase"/>
</dbReference>
<dbReference type="GO" id="GO:0033617">
    <property type="term" value="P:mitochondrial cytochrome c oxidase assembly"/>
    <property type="evidence" value="ECO:0000315"/>
    <property type="project" value="PomBase"/>
</dbReference>
<dbReference type="GO" id="GO:0006397">
    <property type="term" value="P:mRNA processing"/>
    <property type="evidence" value="ECO:0007669"/>
    <property type="project" value="UniProtKB-KW"/>
</dbReference>
<dbReference type="GO" id="GO:0008380">
    <property type="term" value="P:RNA splicing"/>
    <property type="evidence" value="ECO:0007669"/>
    <property type="project" value="UniProtKB-KW"/>
</dbReference>
<dbReference type="InterPro" id="IPR046824">
    <property type="entry name" value="Mss51-like_C"/>
</dbReference>
<dbReference type="InterPro" id="IPR032717">
    <property type="entry name" value="Mss51_Znf"/>
</dbReference>
<dbReference type="PANTHER" id="PTHR28069">
    <property type="entry name" value="GH20023P"/>
    <property type="match status" value="1"/>
</dbReference>
<dbReference type="PANTHER" id="PTHR28069:SF1">
    <property type="entry name" value="PROTEIN MSS51, MITOCHONDRIAL"/>
    <property type="match status" value="1"/>
</dbReference>
<dbReference type="Pfam" id="PF20179">
    <property type="entry name" value="MSS51_C"/>
    <property type="match status" value="1"/>
</dbReference>
<dbReference type="Pfam" id="PF13824">
    <property type="entry name" value="zf-Mss51"/>
    <property type="match status" value="1"/>
</dbReference>
<keyword id="KW-0472">Membrane</keyword>
<keyword id="KW-0496">Mitochondrion</keyword>
<keyword id="KW-0999">Mitochondrion inner membrane</keyword>
<keyword id="KW-0507">mRNA processing</keyword>
<keyword id="KW-0508">mRNA splicing</keyword>
<keyword id="KW-1185">Reference proteome</keyword>
<sequence length="378" mass="43600">MSFLKNLFKKKSPTHELFHPLSRSPLTALRRRSEHIKQVYRCPISGKSVEYECPESGFPTHCNRTHWEQDKIHQSLIPKLRQINEDYHDLARPNPLPELLKLPGPMEEDEVVSLLSWDSFFYTRDFPKFQSSRTARHITSLLTYPMSIGAILHKNSPYNLKNGLTPQGLQSLTALRYMLHRPLSAQSTDPRPTRIFVLGATKECSLPPSIWLQGLNFLFPGRLFQLHFIGPEVVVPSKQPNLPSPLSLHFHQDYYHNLHRVGAFEPFDPYYDTFFLPMPLISHPLYSSSWIPTLHDLVSTRCSVWLTSPSSQRTTKDLEVLNNVLKDSIEPLLLPTVNKFASLGWSVDDSNLHEVYHANQEVFGFRALYYNVQNVSKE</sequence>
<accession>Q9UTB4</accession>
<reference key="1">
    <citation type="journal article" date="2002" name="Nature">
        <title>The genome sequence of Schizosaccharomyces pombe.</title>
        <authorList>
            <person name="Wood V."/>
            <person name="Gwilliam R."/>
            <person name="Rajandream M.A."/>
            <person name="Lyne M.H."/>
            <person name="Lyne R."/>
            <person name="Stewart A."/>
            <person name="Sgouros J.G."/>
            <person name="Peat N."/>
            <person name="Hayles J."/>
            <person name="Baker S.G."/>
            <person name="Basham D."/>
            <person name="Bowman S."/>
            <person name="Brooks K."/>
            <person name="Brown D."/>
            <person name="Brown S."/>
            <person name="Chillingworth T."/>
            <person name="Churcher C.M."/>
            <person name="Collins M."/>
            <person name="Connor R."/>
            <person name="Cronin A."/>
            <person name="Davis P."/>
            <person name="Feltwell T."/>
            <person name="Fraser A."/>
            <person name="Gentles S."/>
            <person name="Goble A."/>
            <person name="Hamlin N."/>
            <person name="Harris D.E."/>
            <person name="Hidalgo J."/>
            <person name="Hodgson G."/>
            <person name="Holroyd S."/>
            <person name="Hornsby T."/>
            <person name="Howarth S."/>
            <person name="Huckle E.J."/>
            <person name="Hunt S."/>
            <person name="Jagels K."/>
            <person name="James K.D."/>
            <person name="Jones L."/>
            <person name="Jones M."/>
            <person name="Leather S."/>
            <person name="McDonald S."/>
            <person name="McLean J."/>
            <person name="Mooney P."/>
            <person name="Moule S."/>
            <person name="Mungall K.L."/>
            <person name="Murphy L.D."/>
            <person name="Niblett D."/>
            <person name="Odell C."/>
            <person name="Oliver K."/>
            <person name="O'Neil S."/>
            <person name="Pearson D."/>
            <person name="Quail M.A."/>
            <person name="Rabbinowitsch E."/>
            <person name="Rutherford K.M."/>
            <person name="Rutter S."/>
            <person name="Saunders D."/>
            <person name="Seeger K."/>
            <person name="Sharp S."/>
            <person name="Skelton J."/>
            <person name="Simmonds M.N."/>
            <person name="Squares R."/>
            <person name="Squares S."/>
            <person name="Stevens K."/>
            <person name="Taylor K."/>
            <person name="Taylor R.G."/>
            <person name="Tivey A."/>
            <person name="Walsh S.V."/>
            <person name="Warren T."/>
            <person name="Whitehead S."/>
            <person name="Woodward J.R."/>
            <person name="Volckaert G."/>
            <person name="Aert R."/>
            <person name="Robben J."/>
            <person name="Grymonprez B."/>
            <person name="Weltjens I."/>
            <person name="Vanstreels E."/>
            <person name="Rieger M."/>
            <person name="Schaefer M."/>
            <person name="Mueller-Auer S."/>
            <person name="Gabel C."/>
            <person name="Fuchs M."/>
            <person name="Duesterhoeft A."/>
            <person name="Fritzc C."/>
            <person name="Holzer E."/>
            <person name="Moestl D."/>
            <person name="Hilbert H."/>
            <person name="Borzym K."/>
            <person name="Langer I."/>
            <person name="Beck A."/>
            <person name="Lehrach H."/>
            <person name="Reinhardt R."/>
            <person name="Pohl T.M."/>
            <person name="Eger P."/>
            <person name="Zimmermann W."/>
            <person name="Wedler H."/>
            <person name="Wambutt R."/>
            <person name="Purnelle B."/>
            <person name="Goffeau A."/>
            <person name="Cadieu E."/>
            <person name="Dreano S."/>
            <person name="Gloux S."/>
            <person name="Lelaure V."/>
            <person name="Mottier S."/>
            <person name="Galibert F."/>
            <person name="Aves S.J."/>
            <person name="Xiang Z."/>
            <person name="Hunt C."/>
            <person name="Moore K."/>
            <person name="Hurst S.M."/>
            <person name="Lucas M."/>
            <person name="Rochet M."/>
            <person name="Gaillardin C."/>
            <person name="Tallada V.A."/>
            <person name="Garzon A."/>
            <person name="Thode G."/>
            <person name="Daga R.R."/>
            <person name="Cruzado L."/>
            <person name="Jimenez J."/>
            <person name="Sanchez M."/>
            <person name="del Rey F."/>
            <person name="Benito J."/>
            <person name="Dominguez A."/>
            <person name="Revuelta J.L."/>
            <person name="Moreno S."/>
            <person name="Armstrong J."/>
            <person name="Forsburg S.L."/>
            <person name="Cerutti L."/>
            <person name="Lowe T."/>
            <person name="McCombie W.R."/>
            <person name="Paulsen I."/>
            <person name="Potashkin J."/>
            <person name="Shpakovski G.V."/>
            <person name="Ussery D."/>
            <person name="Barrell B.G."/>
            <person name="Nurse P."/>
        </authorList>
    </citation>
    <scope>NUCLEOTIDE SEQUENCE [LARGE SCALE GENOMIC DNA]</scope>
    <source>
        <strain>972 / ATCC 24843</strain>
    </source>
</reference>
<name>MSS51_SCHPO</name>